<gene>
    <name evidence="1" type="primary">moaC</name>
    <name type="ordered locus">SPAB_02712</name>
</gene>
<name>MOAC_SALPB</name>
<proteinExistence type="inferred from homology"/>
<keyword id="KW-0456">Lyase</keyword>
<keyword id="KW-0501">Molybdenum cofactor biosynthesis</keyword>
<feature type="chain" id="PRO_1000085684" description="Cyclic pyranopterin monophosphate synthase">
    <location>
        <begin position="1"/>
        <end position="161"/>
    </location>
</feature>
<feature type="active site" evidence="1">
    <location>
        <position position="128"/>
    </location>
</feature>
<feature type="binding site" evidence="1">
    <location>
        <begin position="75"/>
        <end position="77"/>
    </location>
    <ligand>
        <name>substrate</name>
    </ligand>
</feature>
<feature type="binding site" evidence="1">
    <location>
        <begin position="113"/>
        <end position="114"/>
    </location>
    <ligand>
        <name>substrate</name>
    </ligand>
</feature>
<protein>
    <recommendedName>
        <fullName evidence="1">Cyclic pyranopterin monophosphate synthase</fullName>
        <ecNumber evidence="1">4.6.1.17</ecNumber>
    </recommendedName>
    <alternativeName>
        <fullName evidence="1">Molybdenum cofactor biosynthesis protein C</fullName>
    </alternativeName>
</protein>
<reference key="1">
    <citation type="submission" date="2007-11" db="EMBL/GenBank/DDBJ databases">
        <authorList>
            <consortium name="The Salmonella enterica serovar Paratyphi B Genome Sequencing Project"/>
            <person name="McClelland M."/>
            <person name="Sanderson E.K."/>
            <person name="Porwollik S."/>
            <person name="Spieth J."/>
            <person name="Clifton W.S."/>
            <person name="Fulton R."/>
            <person name="Cordes M."/>
            <person name="Wollam A."/>
            <person name="Shah N."/>
            <person name="Pepin K."/>
            <person name="Bhonagiri V."/>
            <person name="Nash W."/>
            <person name="Johnson M."/>
            <person name="Thiruvilangam P."/>
            <person name="Wilson R."/>
        </authorList>
    </citation>
    <scope>NUCLEOTIDE SEQUENCE [LARGE SCALE GENOMIC DNA]</scope>
    <source>
        <strain>ATCC BAA-1250 / SPB7</strain>
    </source>
</reference>
<sequence length="161" mass="17443">MSQLTHINAAGEAHMVDVSAKAETVREARAEAFVTMRSETLAMIVDGKHHKGDVFATARIAGIQAAKRTWELIPLCHPLLLSKVEIQLQAEPEHNRVRIESLCRLTGKTGVEMEALTAASVAALTIYDMCKAVQKDMVIGPVRLLAKSGGKSGDFKVDAHD</sequence>
<comment type="function">
    <text evidence="1">Catalyzes the conversion of (8S)-3',8-cyclo-7,8-dihydroguanosine 5'-triphosphate to cyclic pyranopterin monophosphate (cPMP).</text>
</comment>
<comment type="catalytic activity">
    <reaction evidence="1">
        <text>(8S)-3',8-cyclo-7,8-dihydroguanosine 5'-triphosphate = cyclic pyranopterin phosphate + diphosphate</text>
        <dbReference type="Rhea" id="RHEA:49580"/>
        <dbReference type="ChEBI" id="CHEBI:33019"/>
        <dbReference type="ChEBI" id="CHEBI:59648"/>
        <dbReference type="ChEBI" id="CHEBI:131766"/>
        <dbReference type="EC" id="4.6.1.17"/>
    </reaction>
</comment>
<comment type="pathway">
    <text evidence="1">Cofactor biosynthesis; molybdopterin biosynthesis.</text>
</comment>
<comment type="subunit">
    <text evidence="1">Homohexamer; trimer of dimers.</text>
</comment>
<comment type="similarity">
    <text evidence="1">Belongs to the MoaC family.</text>
</comment>
<dbReference type="EC" id="4.6.1.17" evidence="1"/>
<dbReference type="EMBL" id="CP000886">
    <property type="protein sequence ID" value="ABX68090.1"/>
    <property type="molecule type" value="Genomic_DNA"/>
</dbReference>
<dbReference type="RefSeq" id="WP_000080894.1">
    <property type="nucleotide sequence ID" value="NC_010102.1"/>
</dbReference>
<dbReference type="SMR" id="A9MTH5"/>
<dbReference type="KEGG" id="spq:SPAB_02712"/>
<dbReference type="PATRIC" id="fig|1016998.12.peg.2565"/>
<dbReference type="HOGENOM" id="CLU_074693_1_1_6"/>
<dbReference type="BioCyc" id="SENT1016998:SPAB_RS11020-MONOMER"/>
<dbReference type="UniPathway" id="UPA00344"/>
<dbReference type="Proteomes" id="UP000008556">
    <property type="component" value="Chromosome"/>
</dbReference>
<dbReference type="GO" id="GO:0061799">
    <property type="term" value="F:cyclic pyranopterin monophosphate synthase activity"/>
    <property type="evidence" value="ECO:0007669"/>
    <property type="project" value="UniProtKB-UniRule"/>
</dbReference>
<dbReference type="GO" id="GO:0006777">
    <property type="term" value="P:Mo-molybdopterin cofactor biosynthetic process"/>
    <property type="evidence" value="ECO:0007669"/>
    <property type="project" value="UniProtKB-UniRule"/>
</dbReference>
<dbReference type="CDD" id="cd01420">
    <property type="entry name" value="MoaC_PE"/>
    <property type="match status" value="1"/>
</dbReference>
<dbReference type="FunFam" id="3.30.70.640:FF:000001">
    <property type="entry name" value="Cyclic pyranopterin monophosphate synthase"/>
    <property type="match status" value="1"/>
</dbReference>
<dbReference type="Gene3D" id="3.30.70.640">
    <property type="entry name" value="Molybdopterin cofactor biosynthesis C (MoaC) domain"/>
    <property type="match status" value="1"/>
</dbReference>
<dbReference type="HAMAP" id="MF_01224_B">
    <property type="entry name" value="MoaC_B"/>
    <property type="match status" value="1"/>
</dbReference>
<dbReference type="InterPro" id="IPR023045">
    <property type="entry name" value="MoaC"/>
</dbReference>
<dbReference type="InterPro" id="IPR047594">
    <property type="entry name" value="MoaC_bact/euk"/>
</dbReference>
<dbReference type="InterPro" id="IPR036522">
    <property type="entry name" value="MoaC_sf"/>
</dbReference>
<dbReference type="InterPro" id="IPR050105">
    <property type="entry name" value="MoCo_biosynth_MoaA/MoaC"/>
</dbReference>
<dbReference type="InterPro" id="IPR002820">
    <property type="entry name" value="Mopterin_CF_biosynth-C_dom"/>
</dbReference>
<dbReference type="NCBIfam" id="TIGR00581">
    <property type="entry name" value="moaC"/>
    <property type="match status" value="1"/>
</dbReference>
<dbReference type="NCBIfam" id="NF006870">
    <property type="entry name" value="PRK09364.1"/>
    <property type="match status" value="1"/>
</dbReference>
<dbReference type="PANTHER" id="PTHR22960">
    <property type="entry name" value="MOLYBDOPTERIN COFACTOR SYNTHESIS PROTEIN A"/>
    <property type="match status" value="1"/>
</dbReference>
<dbReference type="Pfam" id="PF01967">
    <property type="entry name" value="MoaC"/>
    <property type="match status" value="1"/>
</dbReference>
<dbReference type="SUPFAM" id="SSF55040">
    <property type="entry name" value="Molybdenum cofactor biosynthesis protein C, MoaC"/>
    <property type="match status" value="1"/>
</dbReference>
<evidence type="ECO:0000255" key="1">
    <source>
        <dbReference type="HAMAP-Rule" id="MF_01224"/>
    </source>
</evidence>
<accession>A9MTH5</accession>
<organism>
    <name type="scientific">Salmonella paratyphi B (strain ATCC BAA-1250 / SPB7)</name>
    <dbReference type="NCBI Taxonomy" id="1016998"/>
    <lineage>
        <taxon>Bacteria</taxon>
        <taxon>Pseudomonadati</taxon>
        <taxon>Pseudomonadota</taxon>
        <taxon>Gammaproteobacteria</taxon>
        <taxon>Enterobacterales</taxon>
        <taxon>Enterobacteriaceae</taxon>
        <taxon>Salmonella</taxon>
    </lineage>
</organism>